<comment type="catalytic activity">
    <reaction>
        <text>L-seryl-[protein] + ATP = O-phospho-L-seryl-[protein] + ADP + H(+)</text>
        <dbReference type="Rhea" id="RHEA:17989"/>
        <dbReference type="Rhea" id="RHEA-COMP:9863"/>
        <dbReference type="Rhea" id="RHEA-COMP:11604"/>
        <dbReference type="ChEBI" id="CHEBI:15378"/>
        <dbReference type="ChEBI" id="CHEBI:29999"/>
        <dbReference type="ChEBI" id="CHEBI:30616"/>
        <dbReference type="ChEBI" id="CHEBI:83421"/>
        <dbReference type="ChEBI" id="CHEBI:456216"/>
        <dbReference type="EC" id="2.7.11.1"/>
    </reaction>
</comment>
<comment type="catalytic activity">
    <reaction>
        <text>L-threonyl-[protein] + ATP = O-phospho-L-threonyl-[protein] + ADP + H(+)</text>
        <dbReference type="Rhea" id="RHEA:46608"/>
        <dbReference type="Rhea" id="RHEA-COMP:11060"/>
        <dbReference type="Rhea" id="RHEA-COMP:11605"/>
        <dbReference type="ChEBI" id="CHEBI:15378"/>
        <dbReference type="ChEBI" id="CHEBI:30013"/>
        <dbReference type="ChEBI" id="CHEBI:30616"/>
        <dbReference type="ChEBI" id="CHEBI:61977"/>
        <dbReference type="ChEBI" id="CHEBI:456216"/>
        <dbReference type="EC" id="2.7.11.1"/>
    </reaction>
</comment>
<comment type="subcellular location">
    <subcellularLocation>
        <location evidence="5">Membrane</location>
        <topology evidence="5">Multi-pass membrane protein</topology>
    </subcellularLocation>
</comment>
<comment type="similarity">
    <text evidence="2">Belongs to the protein kinase superfamily. Ser/Thr protein kinase family.</text>
</comment>
<sequence length="1212" mass="140458">MSDYILSAEINLPLLKWMTSFKLNSNLFSTSRNQSLKSISEIYRDLQYNIIPPKDEELQNLWTHLYDLNNYYSNSIEYNQVEKSLMGLKSKYRNSYLKGYYEIINLFQSIANDFEKLSSPISQTTTTTQIPIISFNKNSVLDAINNRKNENKENSFKFLSSFESYVPTVEEIKRIYCIDNKEILIDKSCTLPVEYKLFHSFSLLNLYVYLIIVIRIIKLIGEINRQSSNASENQEILHLLKEYSLHIKSIEEFQLQLKLNNLYYQPTKKEIILKYFVEINSNNNLNNLNNNNDNNLNNNNSNNNLNNNNNSNSNFNNDNNLNSNINSNDTSISNNNSIINNNSNNSNTNNNNNNNIINNIKIFEFSEKELKYSKRYYSYNEFTLRPAELPNNSLGIETQNLIFYTTSNYNSGNSNSGSNNSNSSNNNSSSNSLINNSGGNSNSGLIPKIKFNHHRPKDINPKIVLAVYNNILSMSKVIDKKTINSMNEIIKNNNNNNNNNSNNNNNNNDEDDSDYEENEFNKEFNNQFEFGSEIIEQDKECYICRFRSEFISFCNYCKCKMICDLCSVNKVCWNCYFKVDKVSGNEQQQQQQHFIPLEVVVKLKDRKYPRLIYMLLRSYSFRDLMNTLYQDRFERDSVISPKDRFTYKLHKTKLYNFHLVLPNCKNPFQTKEIQIFDDYSLIIALRLLMNFILSNYIIDQKEVPPPPTQPSSRPQSPPTVSPLTPLNNHHHSGGSLLEHAIARNFNNNSVEVVSDDNTSGSGTGGSNSNSNTGGSYNKFNNNNNNRKNSTGSGTNSRNNNSDNEYSYNNNNNNYNNNNNNKIINNNSIVTVENPILWNIDKFILNVIESSIDIEQSLKIPSSCIETEIEPFASGGQANIYMVKHIDWPMLSNCPEGSYVFKQFIETKDSLQLEEDIEREMYEEKIYQTYKTGESVDNFKYNFSNVEQTDKKSLETLFYEEVDKLKRLQFSDYIIKMPAISDDNPNKRGMLLECATAGSLKTNLLEYRSWKLVIRFMMDICLGMIDIHKCQIIHRDLKPDNILVFENFNSSEASDENDERQREFGGLICKITDLGASIQKELVHDNNFTSTFHTDDYVPEEYGRFQYDGEKVDIYSFGCTFFEMVTKHRYQYKHPTPLHRDFLTTDFQYIPIRIKTLIASLLAEQSQRKQSFNEVYNDLQDIYKNVIPGLPDIPLSPISTNGSQFCKRCNPQK</sequence>
<accession>Q54PK8</accession>
<dbReference type="EC" id="2.7.11.1"/>
<dbReference type="EMBL" id="AAFI02000066">
    <property type="protein sequence ID" value="EAL65172.1"/>
    <property type="molecule type" value="Genomic_DNA"/>
</dbReference>
<dbReference type="RefSeq" id="XP_638524.1">
    <property type="nucleotide sequence ID" value="XM_633432.1"/>
</dbReference>
<dbReference type="FunCoup" id="Q54PK8">
    <property type="interactions" value="640"/>
</dbReference>
<dbReference type="GlyGen" id="Q54PK8">
    <property type="glycosylation" value="15 sites"/>
</dbReference>
<dbReference type="PaxDb" id="44689-DDB0231198"/>
<dbReference type="EnsemblProtists" id="EAL65172">
    <property type="protein sequence ID" value="EAL65172"/>
    <property type="gene ID" value="DDB_G0284491"/>
</dbReference>
<dbReference type="GeneID" id="8624617"/>
<dbReference type="KEGG" id="ddi:DDB_G0284491"/>
<dbReference type="dictyBase" id="DDB_G0284491"/>
<dbReference type="VEuPathDB" id="AmoebaDB:DDB_G0284491"/>
<dbReference type="eggNOG" id="KOG0192">
    <property type="taxonomic scope" value="Eukaryota"/>
</dbReference>
<dbReference type="HOGENOM" id="CLU_269659_0_0_1"/>
<dbReference type="InParanoid" id="Q54PK8"/>
<dbReference type="OMA" id="GGQANIY"/>
<dbReference type="PRO" id="PR:Q54PK8"/>
<dbReference type="Proteomes" id="UP000002195">
    <property type="component" value="Chromosome 4"/>
</dbReference>
<dbReference type="GO" id="GO:0016020">
    <property type="term" value="C:membrane"/>
    <property type="evidence" value="ECO:0007669"/>
    <property type="project" value="UniProtKB-SubCell"/>
</dbReference>
<dbReference type="GO" id="GO:0005524">
    <property type="term" value="F:ATP binding"/>
    <property type="evidence" value="ECO:0007669"/>
    <property type="project" value="UniProtKB-KW"/>
</dbReference>
<dbReference type="GO" id="GO:0106310">
    <property type="term" value="F:protein serine kinase activity"/>
    <property type="evidence" value="ECO:0007669"/>
    <property type="project" value="RHEA"/>
</dbReference>
<dbReference type="GO" id="GO:0004674">
    <property type="term" value="F:protein serine/threonine kinase activity"/>
    <property type="evidence" value="ECO:0007669"/>
    <property type="project" value="UniProtKB-KW"/>
</dbReference>
<dbReference type="CDD" id="cd00180">
    <property type="entry name" value="PKc"/>
    <property type="match status" value="1"/>
</dbReference>
<dbReference type="Gene3D" id="1.10.510.10">
    <property type="entry name" value="Transferase(Phosphotransferase) domain 1"/>
    <property type="match status" value="1"/>
</dbReference>
<dbReference type="InterPro" id="IPR011009">
    <property type="entry name" value="Kinase-like_dom_sf"/>
</dbReference>
<dbReference type="InterPro" id="IPR000719">
    <property type="entry name" value="Prot_kinase_dom"/>
</dbReference>
<dbReference type="InterPro" id="IPR008271">
    <property type="entry name" value="Ser/Thr_kinase_AS"/>
</dbReference>
<dbReference type="PANTHER" id="PTHR34495:SF4">
    <property type="entry name" value="UNC-51 LIKE AUTOPHAGY ACTIVATING KINASE 1A"/>
    <property type="match status" value="1"/>
</dbReference>
<dbReference type="PANTHER" id="PTHR34495">
    <property type="entry name" value="UNC-51-LIKE AUTOPHAGY-ACTIVATING KINASE 1A"/>
    <property type="match status" value="1"/>
</dbReference>
<dbReference type="Pfam" id="PF00069">
    <property type="entry name" value="Pkinase"/>
    <property type="match status" value="1"/>
</dbReference>
<dbReference type="SMART" id="SM00220">
    <property type="entry name" value="S_TKc"/>
    <property type="match status" value="1"/>
</dbReference>
<dbReference type="SUPFAM" id="SSF56112">
    <property type="entry name" value="Protein kinase-like (PK-like)"/>
    <property type="match status" value="1"/>
</dbReference>
<dbReference type="PROSITE" id="PS50011">
    <property type="entry name" value="PROTEIN_KINASE_DOM"/>
    <property type="match status" value="1"/>
</dbReference>
<dbReference type="PROSITE" id="PS00108">
    <property type="entry name" value="PROTEIN_KINASE_ST"/>
    <property type="match status" value="1"/>
</dbReference>
<protein>
    <recommendedName>
        <fullName>Probable serine/threonine-protein kinase DDB_G0284491</fullName>
        <ecNumber>2.7.11.1</ecNumber>
    </recommendedName>
</protein>
<proteinExistence type="inferred from homology"/>
<name>Y4491_DICDI</name>
<gene>
    <name type="ORF">DDB_G0284491</name>
</gene>
<feature type="chain" id="PRO_0000362054" description="Probable serine/threonine-protein kinase DDB_G0284491">
    <location>
        <begin position="1"/>
        <end position="1212"/>
    </location>
</feature>
<feature type="transmembrane region" description="Helical" evidence="1">
    <location>
        <begin position="197"/>
        <end position="217"/>
    </location>
</feature>
<feature type="transmembrane region" description="Helical" evidence="1">
    <location>
        <begin position="673"/>
        <end position="693"/>
    </location>
</feature>
<feature type="domain" description="Protein kinase" evidence="2">
    <location>
        <begin position="865"/>
        <end position="1182"/>
    </location>
</feature>
<feature type="region of interest" description="Disordered" evidence="4">
    <location>
        <begin position="288"/>
        <end position="329"/>
    </location>
</feature>
<feature type="region of interest" description="Disordered" evidence="4">
    <location>
        <begin position="412"/>
        <end position="439"/>
    </location>
</feature>
<feature type="region of interest" description="Disordered" evidence="4">
    <location>
        <begin position="489"/>
        <end position="517"/>
    </location>
</feature>
<feature type="region of interest" description="Disordered" evidence="4">
    <location>
        <begin position="703"/>
        <end position="733"/>
    </location>
</feature>
<feature type="region of interest" description="Disordered" evidence="4">
    <location>
        <begin position="751"/>
        <end position="813"/>
    </location>
</feature>
<feature type="compositionally biased region" description="Low complexity" evidence="4">
    <location>
        <begin position="489"/>
        <end position="507"/>
    </location>
</feature>
<feature type="compositionally biased region" description="Acidic residues" evidence="4">
    <location>
        <begin position="508"/>
        <end position="517"/>
    </location>
</feature>
<feature type="compositionally biased region" description="Pro residues" evidence="4">
    <location>
        <begin position="703"/>
        <end position="720"/>
    </location>
</feature>
<feature type="active site" description="Proton acceptor" evidence="2 3">
    <location>
        <position position="1035"/>
    </location>
</feature>
<feature type="binding site" evidence="2">
    <location>
        <begin position="871"/>
        <end position="879"/>
    </location>
    <ligand>
        <name>ATP</name>
        <dbReference type="ChEBI" id="CHEBI:30616"/>
    </ligand>
</feature>
<feature type="binding site" evidence="2">
    <location>
        <position position="924"/>
    </location>
    <ligand>
        <name>ATP</name>
        <dbReference type="ChEBI" id="CHEBI:30616"/>
    </ligand>
</feature>
<feature type="glycosylation site" description="N-linked (GlcNAc...) asparagine" evidence="1">
    <location>
        <position position="229"/>
    </location>
</feature>
<feature type="glycosylation site" description="N-linked (GlcNAc...) asparagine" evidence="1">
    <location>
        <position position="299"/>
    </location>
</feature>
<feature type="glycosylation site" description="N-linked (GlcNAc...) asparagine" evidence="1">
    <location>
        <position position="309"/>
    </location>
</feature>
<feature type="glycosylation site" description="N-linked (GlcNAc...) asparagine" evidence="1">
    <location>
        <position position="328"/>
    </location>
</feature>
<feature type="glycosylation site" description="N-linked (GlcNAc...) asparagine" evidence="1">
    <location>
        <position position="335"/>
    </location>
</feature>
<feature type="glycosylation site" description="N-linked (GlcNAc...) asparagine" evidence="1">
    <location>
        <position position="341"/>
    </location>
</feature>
<feature type="glycosylation site" description="N-linked (GlcNAc...) asparagine" evidence="1">
    <location>
        <position position="344"/>
    </location>
</feature>
<feature type="glycosylation site" description="N-linked (GlcNAc...) asparagine" evidence="1">
    <location>
        <position position="391"/>
    </location>
</feature>
<feature type="glycosylation site" description="N-linked (GlcNAc...) asparagine" evidence="1">
    <location>
        <position position="419"/>
    </location>
</feature>
<feature type="glycosylation site" description="N-linked (GlcNAc...) asparagine" evidence="1">
    <location>
        <position position="422"/>
    </location>
</feature>
<feature type="glycosylation site" description="N-linked (GlcNAc...) asparagine" evidence="1">
    <location>
        <position position="426"/>
    </location>
</feature>
<feature type="glycosylation site" description="N-linked (GlcNAc...) asparagine" evidence="1">
    <location>
        <position position="427"/>
    </location>
</feature>
<feature type="glycosylation site" description="N-linked (GlcNAc...) asparagine" evidence="1">
    <location>
        <position position="435"/>
    </location>
</feature>
<feature type="glycosylation site" description="N-linked (GlcNAc...) asparagine" evidence="1">
    <location>
        <position position="499"/>
    </location>
</feature>
<evidence type="ECO:0000255" key="1"/>
<evidence type="ECO:0000255" key="2">
    <source>
        <dbReference type="PROSITE-ProRule" id="PRU00159"/>
    </source>
</evidence>
<evidence type="ECO:0000255" key="3">
    <source>
        <dbReference type="PROSITE-ProRule" id="PRU10027"/>
    </source>
</evidence>
<evidence type="ECO:0000256" key="4">
    <source>
        <dbReference type="SAM" id="MobiDB-lite"/>
    </source>
</evidence>
<evidence type="ECO:0000305" key="5"/>
<organism>
    <name type="scientific">Dictyostelium discoideum</name>
    <name type="common">Social amoeba</name>
    <dbReference type="NCBI Taxonomy" id="44689"/>
    <lineage>
        <taxon>Eukaryota</taxon>
        <taxon>Amoebozoa</taxon>
        <taxon>Evosea</taxon>
        <taxon>Eumycetozoa</taxon>
        <taxon>Dictyostelia</taxon>
        <taxon>Dictyosteliales</taxon>
        <taxon>Dictyosteliaceae</taxon>
        <taxon>Dictyostelium</taxon>
    </lineage>
</organism>
<keyword id="KW-0067">ATP-binding</keyword>
<keyword id="KW-0325">Glycoprotein</keyword>
<keyword id="KW-0418">Kinase</keyword>
<keyword id="KW-0472">Membrane</keyword>
<keyword id="KW-0547">Nucleotide-binding</keyword>
<keyword id="KW-1185">Reference proteome</keyword>
<keyword id="KW-0723">Serine/threonine-protein kinase</keyword>
<keyword id="KW-0808">Transferase</keyword>
<keyword id="KW-0812">Transmembrane</keyword>
<keyword id="KW-1133">Transmembrane helix</keyword>
<reference key="1">
    <citation type="journal article" date="2005" name="Nature">
        <title>The genome of the social amoeba Dictyostelium discoideum.</title>
        <authorList>
            <person name="Eichinger L."/>
            <person name="Pachebat J.A."/>
            <person name="Gloeckner G."/>
            <person name="Rajandream M.A."/>
            <person name="Sucgang R."/>
            <person name="Berriman M."/>
            <person name="Song J."/>
            <person name="Olsen R."/>
            <person name="Szafranski K."/>
            <person name="Xu Q."/>
            <person name="Tunggal B."/>
            <person name="Kummerfeld S."/>
            <person name="Madera M."/>
            <person name="Konfortov B.A."/>
            <person name="Rivero F."/>
            <person name="Bankier A.T."/>
            <person name="Lehmann R."/>
            <person name="Hamlin N."/>
            <person name="Davies R."/>
            <person name="Gaudet P."/>
            <person name="Fey P."/>
            <person name="Pilcher K."/>
            <person name="Chen G."/>
            <person name="Saunders D."/>
            <person name="Sodergren E.J."/>
            <person name="Davis P."/>
            <person name="Kerhornou A."/>
            <person name="Nie X."/>
            <person name="Hall N."/>
            <person name="Anjard C."/>
            <person name="Hemphill L."/>
            <person name="Bason N."/>
            <person name="Farbrother P."/>
            <person name="Desany B."/>
            <person name="Just E."/>
            <person name="Morio T."/>
            <person name="Rost R."/>
            <person name="Churcher C.M."/>
            <person name="Cooper J."/>
            <person name="Haydock S."/>
            <person name="van Driessche N."/>
            <person name="Cronin A."/>
            <person name="Goodhead I."/>
            <person name="Muzny D.M."/>
            <person name="Mourier T."/>
            <person name="Pain A."/>
            <person name="Lu M."/>
            <person name="Harper D."/>
            <person name="Lindsay R."/>
            <person name="Hauser H."/>
            <person name="James K.D."/>
            <person name="Quiles M."/>
            <person name="Madan Babu M."/>
            <person name="Saito T."/>
            <person name="Buchrieser C."/>
            <person name="Wardroper A."/>
            <person name="Felder M."/>
            <person name="Thangavelu M."/>
            <person name="Johnson D."/>
            <person name="Knights A."/>
            <person name="Loulseged H."/>
            <person name="Mungall K.L."/>
            <person name="Oliver K."/>
            <person name="Price C."/>
            <person name="Quail M.A."/>
            <person name="Urushihara H."/>
            <person name="Hernandez J."/>
            <person name="Rabbinowitsch E."/>
            <person name="Steffen D."/>
            <person name="Sanders M."/>
            <person name="Ma J."/>
            <person name="Kohara Y."/>
            <person name="Sharp S."/>
            <person name="Simmonds M.N."/>
            <person name="Spiegler S."/>
            <person name="Tivey A."/>
            <person name="Sugano S."/>
            <person name="White B."/>
            <person name="Walker D."/>
            <person name="Woodward J.R."/>
            <person name="Winckler T."/>
            <person name="Tanaka Y."/>
            <person name="Shaulsky G."/>
            <person name="Schleicher M."/>
            <person name="Weinstock G.M."/>
            <person name="Rosenthal A."/>
            <person name="Cox E.C."/>
            <person name="Chisholm R.L."/>
            <person name="Gibbs R.A."/>
            <person name="Loomis W.F."/>
            <person name="Platzer M."/>
            <person name="Kay R.R."/>
            <person name="Williams J.G."/>
            <person name="Dear P.H."/>
            <person name="Noegel A.A."/>
            <person name="Barrell B.G."/>
            <person name="Kuspa A."/>
        </authorList>
    </citation>
    <scope>NUCLEOTIDE SEQUENCE [LARGE SCALE GENOMIC DNA]</scope>
    <source>
        <strain>AX4</strain>
    </source>
</reference>